<proteinExistence type="inferred from homology"/>
<name>DEF_HAHCH</name>
<feature type="chain" id="PRO_0000301037" description="Peptide deformylase">
    <location>
        <begin position="1"/>
        <end position="168"/>
    </location>
</feature>
<feature type="active site" evidence="1">
    <location>
        <position position="135"/>
    </location>
</feature>
<feature type="binding site" evidence="1">
    <location>
        <position position="92"/>
    </location>
    <ligand>
        <name>Fe cation</name>
        <dbReference type="ChEBI" id="CHEBI:24875"/>
    </ligand>
</feature>
<feature type="binding site" evidence="1">
    <location>
        <position position="134"/>
    </location>
    <ligand>
        <name>Fe cation</name>
        <dbReference type="ChEBI" id="CHEBI:24875"/>
    </ligand>
</feature>
<feature type="binding site" evidence="1">
    <location>
        <position position="138"/>
    </location>
    <ligand>
        <name>Fe cation</name>
        <dbReference type="ChEBI" id="CHEBI:24875"/>
    </ligand>
</feature>
<reference key="1">
    <citation type="journal article" date="2005" name="Nucleic Acids Res.">
        <title>Genomic blueprint of Hahella chejuensis, a marine microbe producing an algicidal agent.</title>
        <authorList>
            <person name="Jeong H."/>
            <person name="Yim J.H."/>
            <person name="Lee C."/>
            <person name="Choi S.-H."/>
            <person name="Park Y.K."/>
            <person name="Yoon S.H."/>
            <person name="Hur C.-G."/>
            <person name="Kang H.-Y."/>
            <person name="Kim D."/>
            <person name="Lee H.H."/>
            <person name="Park K.H."/>
            <person name="Park S.-H."/>
            <person name="Park H.-S."/>
            <person name="Lee H.K."/>
            <person name="Oh T.K."/>
            <person name="Kim J.F."/>
        </authorList>
    </citation>
    <scope>NUCLEOTIDE SEQUENCE [LARGE SCALE GENOMIC DNA]</scope>
    <source>
        <strain>KCTC 2396</strain>
    </source>
</reference>
<accession>Q2SQX1</accession>
<dbReference type="EC" id="3.5.1.88" evidence="1"/>
<dbReference type="EMBL" id="CP000155">
    <property type="protein sequence ID" value="ABC26953.1"/>
    <property type="molecule type" value="Genomic_DNA"/>
</dbReference>
<dbReference type="RefSeq" id="WP_011394030.1">
    <property type="nucleotide sequence ID" value="NC_007645.1"/>
</dbReference>
<dbReference type="SMR" id="Q2SQX1"/>
<dbReference type="STRING" id="349521.HCH_00030"/>
<dbReference type="KEGG" id="hch:HCH_00030"/>
<dbReference type="eggNOG" id="COG0242">
    <property type="taxonomic scope" value="Bacteria"/>
</dbReference>
<dbReference type="HOGENOM" id="CLU_061901_2_1_6"/>
<dbReference type="OrthoDB" id="9804313at2"/>
<dbReference type="Proteomes" id="UP000000238">
    <property type="component" value="Chromosome"/>
</dbReference>
<dbReference type="GO" id="GO:0046872">
    <property type="term" value="F:metal ion binding"/>
    <property type="evidence" value="ECO:0007669"/>
    <property type="project" value="UniProtKB-KW"/>
</dbReference>
<dbReference type="GO" id="GO:0042586">
    <property type="term" value="F:peptide deformylase activity"/>
    <property type="evidence" value="ECO:0007669"/>
    <property type="project" value="UniProtKB-UniRule"/>
</dbReference>
<dbReference type="GO" id="GO:0043686">
    <property type="term" value="P:co-translational protein modification"/>
    <property type="evidence" value="ECO:0007669"/>
    <property type="project" value="TreeGrafter"/>
</dbReference>
<dbReference type="GO" id="GO:0006412">
    <property type="term" value="P:translation"/>
    <property type="evidence" value="ECO:0007669"/>
    <property type="project" value="UniProtKB-UniRule"/>
</dbReference>
<dbReference type="CDD" id="cd00487">
    <property type="entry name" value="Pep_deformylase"/>
    <property type="match status" value="1"/>
</dbReference>
<dbReference type="FunFam" id="3.90.45.10:FF:000001">
    <property type="entry name" value="Peptide deformylase"/>
    <property type="match status" value="1"/>
</dbReference>
<dbReference type="Gene3D" id="3.90.45.10">
    <property type="entry name" value="Peptide deformylase"/>
    <property type="match status" value="1"/>
</dbReference>
<dbReference type="HAMAP" id="MF_00163">
    <property type="entry name" value="Pep_deformylase"/>
    <property type="match status" value="1"/>
</dbReference>
<dbReference type="InterPro" id="IPR023635">
    <property type="entry name" value="Peptide_deformylase"/>
</dbReference>
<dbReference type="InterPro" id="IPR036821">
    <property type="entry name" value="Peptide_deformylase_sf"/>
</dbReference>
<dbReference type="NCBIfam" id="TIGR00079">
    <property type="entry name" value="pept_deformyl"/>
    <property type="match status" value="1"/>
</dbReference>
<dbReference type="NCBIfam" id="NF001159">
    <property type="entry name" value="PRK00150.1-3"/>
    <property type="match status" value="1"/>
</dbReference>
<dbReference type="PANTHER" id="PTHR10458">
    <property type="entry name" value="PEPTIDE DEFORMYLASE"/>
    <property type="match status" value="1"/>
</dbReference>
<dbReference type="PANTHER" id="PTHR10458:SF21">
    <property type="entry name" value="PEPTIDE DEFORMYLASE"/>
    <property type="match status" value="1"/>
</dbReference>
<dbReference type="Pfam" id="PF01327">
    <property type="entry name" value="Pep_deformylase"/>
    <property type="match status" value="1"/>
</dbReference>
<dbReference type="PIRSF" id="PIRSF004749">
    <property type="entry name" value="Pep_def"/>
    <property type="match status" value="1"/>
</dbReference>
<dbReference type="PRINTS" id="PR01576">
    <property type="entry name" value="PDEFORMYLASE"/>
</dbReference>
<dbReference type="SUPFAM" id="SSF56420">
    <property type="entry name" value="Peptide deformylase"/>
    <property type="match status" value="1"/>
</dbReference>
<comment type="function">
    <text evidence="1">Removes the formyl group from the N-terminal Met of newly synthesized proteins. Requires at least a dipeptide for an efficient rate of reaction. N-terminal L-methionine is a prerequisite for activity but the enzyme has broad specificity at other positions.</text>
</comment>
<comment type="catalytic activity">
    <reaction evidence="1">
        <text>N-terminal N-formyl-L-methionyl-[peptide] + H2O = N-terminal L-methionyl-[peptide] + formate</text>
        <dbReference type="Rhea" id="RHEA:24420"/>
        <dbReference type="Rhea" id="RHEA-COMP:10639"/>
        <dbReference type="Rhea" id="RHEA-COMP:10640"/>
        <dbReference type="ChEBI" id="CHEBI:15377"/>
        <dbReference type="ChEBI" id="CHEBI:15740"/>
        <dbReference type="ChEBI" id="CHEBI:49298"/>
        <dbReference type="ChEBI" id="CHEBI:64731"/>
        <dbReference type="EC" id="3.5.1.88"/>
    </reaction>
</comment>
<comment type="cofactor">
    <cofactor evidence="1">
        <name>Fe(2+)</name>
        <dbReference type="ChEBI" id="CHEBI:29033"/>
    </cofactor>
    <text evidence="1">Binds 1 Fe(2+) ion.</text>
</comment>
<comment type="similarity">
    <text evidence="1">Belongs to the polypeptide deformylase family.</text>
</comment>
<evidence type="ECO:0000255" key="1">
    <source>
        <dbReference type="HAMAP-Rule" id="MF_00163"/>
    </source>
</evidence>
<protein>
    <recommendedName>
        <fullName evidence="1">Peptide deformylase</fullName>
        <shortName evidence="1">PDF</shortName>
        <ecNumber evidence="1">3.5.1.88</ecNumber>
    </recommendedName>
    <alternativeName>
        <fullName evidence="1">Polypeptide deformylase</fullName>
    </alternativeName>
</protein>
<sequence length="168" mass="19152">MSKLQILEFPDPRLRTVAKPVQTFDAALGQLIDDMFETMYEAPGIGLAATQVDVHKRIVVIDVSEDKSEPMVFINPDIEVLDGDPEEMQEGCLSVPGFYESVTRIPHVKIRAQDRNGESYEMEARGLLAVCLQHEVDHLNGKLYVDYLSNVKRTRIRKKLEKQHKMRA</sequence>
<organism>
    <name type="scientific">Hahella chejuensis (strain KCTC 2396)</name>
    <dbReference type="NCBI Taxonomy" id="349521"/>
    <lineage>
        <taxon>Bacteria</taxon>
        <taxon>Pseudomonadati</taxon>
        <taxon>Pseudomonadota</taxon>
        <taxon>Gammaproteobacteria</taxon>
        <taxon>Oceanospirillales</taxon>
        <taxon>Hahellaceae</taxon>
        <taxon>Hahella</taxon>
    </lineage>
</organism>
<gene>
    <name evidence="1" type="primary">def</name>
    <name type="ordered locus">HCH_00030</name>
</gene>
<keyword id="KW-0378">Hydrolase</keyword>
<keyword id="KW-0408">Iron</keyword>
<keyword id="KW-0479">Metal-binding</keyword>
<keyword id="KW-0648">Protein biosynthesis</keyword>
<keyword id="KW-1185">Reference proteome</keyword>